<dbReference type="EC" id="6.3.2.1" evidence="1"/>
<dbReference type="EMBL" id="CP001616">
    <property type="protein sequence ID" value="ACQ93900.1"/>
    <property type="molecule type" value="Genomic_DNA"/>
</dbReference>
<dbReference type="RefSeq" id="WP_015879368.1">
    <property type="nucleotide sequence ID" value="NC_012691.1"/>
</dbReference>
<dbReference type="SMR" id="C4L930"/>
<dbReference type="STRING" id="595494.Tola_2303"/>
<dbReference type="KEGG" id="tau:Tola_2303"/>
<dbReference type="eggNOG" id="COG0414">
    <property type="taxonomic scope" value="Bacteria"/>
</dbReference>
<dbReference type="HOGENOM" id="CLU_047148_0_0_6"/>
<dbReference type="OrthoDB" id="9773087at2"/>
<dbReference type="UniPathway" id="UPA00028">
    <property type="reaction ID" value="UER00005"/>
</dbReference>
<dbReference type="Proteomes" id="UP000009073">
    <property type="component" value="Chromosome"/>
</dbReference>
<dbReference type="GO" id="GO:0005829">
    <property type="term" value="C:cytosol"/>
    <property type="evidence" value="ECO:0007669"/>
    <property type="project" value="TreeGrafter"/>
</dbReference>
<dbReference type="GO" id="GO:0005524">
    <property type="term" value="F:ATP binding"/>
    <property type="evidence" value="ECO:0007669"/>
    <property type="project" value="UniProtKB-KW"/>
</dbReference>
<dbReference type="GO" id="GO:0004592">
    <property type="term" value="F:pantoate-beta-alanine ligase activity"/>
    <property type="evidence" value="ECO:0007669"/>
    <property type="project" value="UniProtKB-UniRule"/>
</dbReference>
<dbReference type="GO" id="GO:0015940">
    <property type="term" value="P:pantothenate biosynthetic process"/>
    <property type="evidence" value="ECO:0007669"/>
    <property type="project" value="UniProtKB-UniRule"/>
</dbReference>
<dbReference type="CDD" id="cd00560">
    <property type="entry name" value="PanC"/>
    <property type="match status" value="1"/>
</dbReference>
<dbReference type="FunFam" id="3.30.1300.10:FF:000001">
    <property type="entry name" value="Pantothenate synthetase"/>
    <property type="match status" value="1"/>
</dbReference>
<dbReference type="FunFam" id="3.40.50.620:FF:000013">
    <property type="entry name" value="Pantothenate synthetase"/>
    <property type="match status" value="1"/>
</dbReference>
<dbReference type="Gene3D" id="3.40.50.620">
    <property type="entry name" value="HUPs"/>
    <property type="match status" value="1"/>
</dbReference>
<dbReference type="Gene3D" id="3.30.1300.10">
    <property type="entry name" value="Pantoate-beta-alanine ligase, C-terminal domain"/>
    <property type="match status" value="1"/>
</dbReference>
<dbReference type="HAMAP" id="MF_00158">
    <property type="entry name" value="PanC"/>
    <property type="match status" value="1"/>
</dbReference>
<dbReference type="InterPro" id="IPR004821">
    <property type="entry name" value="Cyt_trans-like"/>
</dbReference>
<dbReference type="InterPro" id="IPR003721">
    <property type="entry name" value="Pantoate_ligase"/>
</dbReference>
<dbReference type="InterPro" id="IPR042176">
    <property type="entry name" value="Pantoate_ligase_C"/>
</dbReference>
<dbReference type="InterPro" id="IPR014729">
    <property type="entry name" value="Rossmann-like_a/b/a_fold"/>
</dbReference>
<dbReference type="NCBIfam" id="TIGR00125">
    <property type="entry name" value="cyt_tran_rel"/>
    <property type="match status" value="1"/>
</dbReference>
<dbReference type="NCBIfam" id="TIGR00018">
    <property type="entry name" value="panC"/>
    <property type="match status" value="1"/>
</dbReference>
<dbReference type="PANTHER" id="PTHR21299">
    <property type="entry name" value="CYTIDYLATE KINASE/PANTOATE-BETA-ALANINE LIGASE"/>
    <property type="match status" value="1"/>
</dbReference>
<dbReference type="PANTHER" id="PTHR21299:SF1">
    <property type="entry name" value="PANTOATE--BETA-ALANINE LIGASE"/>
    <property type="match status" value="1"/>
</dbReference>
<dbReference type="Pfam" id="PF02569">
    <property type="entry name" value="Pantoate_ligase"/>
    <property type="match status" value="1"/>
</dbReference>
<dbReference type="SUPFAM" id="SSF52374">
    <property type="entry name" value="Nucleotidylyl transferase"/>
    <property type="match status" value="1"/>
</dbReference>
<name>PANC_TOLAT</name>
<accession>C4L930</accession>
<reference key="1">
    <citation type="submission" date="2009-05" db="EMBL/GenBank/DDBJ databases">
        <title>Complete sequence of Tolumonas auensis DSM 9187.</title>
        <authorList>
            <consortium name="US DOE Joint Genome Institute"/>
            <person name="Lucas S."/>
            <person name="Copeland A."/>
            <person name="Lapidus A."/>
            <person name="Glavina del Rio T."/>
            <person name="Tice H."/>
            <person name="Bruce D."/>
            <person name="Goodwin L."/>
            <person name="Pitluck S."/>
            <person name="Chertkov O."/>
            <person name="Brettin T."/>
            <person name="Detter J.C."/>
            <person name="Han C."/>
            <person name="Larimer F."/>
            <person name="Land M."/>
            <person name="Hauser L."/>
            <person name="Kyrpides N."/>
            <person name="Mikhailova N."/>
            <person name="Spring S."/>
            <person name="Beller H."/>
        </authorList>
    </citation>
    <scope>NUCLEOTIDE SEQUENCE [LARGE SCALE GENOMIC DNA]</scope>
    <source>
        <strain>DSM 9187 / NBRC 110442 / TA 4</strain>
    </source>
</reference>
<keyword id="KW-0067">ATP-binding</keyword>
<keyword id="KW-0963">Cytoplasm</keyword>
<keyword id="KW-0436">Ligase</keyword>
<keyword id="KW-0547">Nucleotide-binding</keyword>
<keyword id="KW-0566">Pantothenate biosynthesis</keyword>
<keyword id="KW-1185">Reference proteome</keyword>
<gene>
    <name evidence="1" type="primary">panC</name>
    <name type="ordered locus">Tola_2303</name>
</gene>
<evidence type="ECO:0000255" key="1">
    <source>
        <dbReference type="HAMAP-Rule" id="MF_00158"/>
    </source>
</evidence>
<organism>
    <name type="scientific">Tolumonas auensis (strain DSM 9187 / NBRC 110442 / TA 4)</name>
    <dbReference type="NCBI Taxonomy" id="595494"/>
    <lineage>
        <taxon>Bacteria</taxon>
        <taxon>Pseudomonadati</taxon>
        <taxon>Pseudomonadota</taxon>
        <taxon>Gammaproteobacteria</taxon>
        <taxon>Aeromonadales</taxon>
        <taxon>Aeromonadaceae</taxon>
        <taxon>Tolumonas</taxon>
    </lineage>
</organism>
<proteinExistence type="inferred from homology"/>
<comment type="function">
    <text evidence="1">Catalyzes the condensation of pantoate with beta-alanine in an ATP-dependent reaction via a pantoyl-adenylate intermediate.</text>
</comment>
<comment type="catalytic activity">
    <reaction evidence="1">
        <text>(R)-pantoate + beta-alanine + ATP = (R)-pantothenate + AMP + diphosphate + H(+)</text>
        <dbReference type="Rhea" id="RHEA:10912"/>
        <dbReference type="ChEBI" id="CHEBI:15378"/>
        <dbReference type="ChEBI" id="CHEBI:15980"/>
        <dbReference type="ChEBI" id="CHEBI:29032"/>
        <dbReference type="ChEBI" id="CHEBI:30616"/>
        <dbReference type="ChEBI" id="CHEBI:33019"/>
        <dbReference type="ChEBI" id="CHEBI:57966"/>
        <dbReference type="ChEBI" id="CHEBI:456215"/>
        <dbReference type="EC" id="6.3.2.1"/>
    </reaction>
</comment>
<comment type="pathway">
    <text evidence="1">Cofactor biosynthesis; (R)-pantothenate biosynthesis; (R)-pantothenate from (R)-pantoate and beta-alanine: step 1/1.</text>
</comment>
<comment type="subunit">
    <text evidence="1">Homodimer.</text>
</comment>
<comment type="subcellular location">
    <subcellularLocation>
        <location evidence="1">Cytoplasm</location>
    </subcellularLocation>
</comment>
<comment type="miscellaneous">
    <text evidence="1">The reaction proceeds by a bi uni uni bi ping pong mechanism.</text>
</comment>
<comment type="similarity">
    <text evidence="1">Belongs to the pantothenate synthetase family.</text>
</comment>
<protein>
    <recommendedName>
        <fullName evidence="1">Pantothenate synthetase</fullName>
        <shortName evidence="1">PS</shortName>
        <ecNumber evidence="1">6.3.2.1</ecNumber>
    </recommendedName>
    <alternativeName>
        <fullName evidence="1">Pantoate--beta-alanine ligase</fullName>
    </alternativeName>
    <alternativeName>
        <fullName evidence="1">Pantoate-activating enzyme</fullName>
    </alternativeName>
</protein>
<sequence length="288" mass="31771">MLVTEQIDALRAVIREHRQQGKRIAFVPTMGNLHNGHLTLVREAKNHADVVIVSIFVNPMQFDRAEDLVNYPRTLSDDCALLEQEGVTAVFTPTPAIMYPQGLETQTFVEVPEISYLLEGAMRPGHFRGVSTVVTKLFNIVQPDVACFGQKDYQQLALIRKMVRDMTMPIEIIGVPTVRAEDGLALSSRNGYLTAEERLIAPTLAKVMGWIGEQLPARQTAIPALITEAADKLNSAGFRTDAIDIVDAETLLPLSGQSTEAVILMAAWLGNRARLIDNLVVNLRATTR</sequence>
<feature type="chain" id="PRO_1000203497" description="Pantothenate synthetase">
    <location>
        <begin position="1"/>
        <end position="288"/>
    </location>
</feature>
<feature type="active site" description="Proton donor" evidence="1">
    <location>
        <position position="37"/>
    </location>
</feature>
<feature type="binding site" evidence="1">
    <location>
        <begin position="30"/>
        <end position="37"/>
    </location>
    <ligand>
        <name>ATP</name>
        <dbReference type="ChEBI" id="CHEBI:30616"/>
    </ligand>
</feature>
<feature type="binding site" evidence="1">
    <location>
        <position position="61"/>
    </location>
    <ligand>
        <name>(R)-pantoate</name>
        <dbReference type="ChEBI" id="CHEBI:15980"/>
    </ligand>
</feature>
<feature type="binding site" evidence="1">
    <location>
        <position position="61"/>
    </location>
    <ligand>
        <name>beta-alanine</name>
        <dbReference type="ChEBI" id="CHEBI:57966"/>
    </ligand>
</feature>
<feature type="binding site" evidence="1">
    <location>
        <begin position="149"/>
        <end position="152"/>
    </location>
    <ligand>
        <name>ATP</name>
        <dbReference type="ChEBI" id="CHEBI:30616"/>
    </ligand>
</feature>
<feature type="binding site" evidence="1">
    <location>
        <position position="155"/>
    </location>
    <ligand>
        <name>(R)-pantoate</name>
        <dbReference type="ChEBI" id="CHEBI:15980"/>
    </ligand>
</feature>
<feature type="binding site" evidence="1">
    <location>
        <position position="178"/>
    </location>
    <ligand>
        <name>ATP</name>
        <dbReference type="ChEBI" id="CHEBI:30616"/>
    </ligand>
</feature>
<feature type="binding site" evidence="1">
    <location>
        <begin position="186"/>
        <end position="189"/>
    </location>
    <ligand>
        <name>ATP</name>
        <dbReference type="ChEBI" id="CHEBI:30616"/>
    </ligand>
</feature>